<protein>
    <recommendedName>
        <fullName>Frizzled-10</fullName>
        <shortName>Fz-10</shortName>
        <shortName>cFz-10</shortName>
    </recommendedName>
</protein>
<proteinExistence type="evidence at protein level"/>
<reference key="1">
    <citation type="journal article" date="2000" name="Mech. Dev.">
        <title>Identification of chick frizzled-10 expressed in the developing limb and the central nervous system.</title>
        <authorList>
            <person name="Kawakami Y."/>
            <person name="Wada N."/>
            <person name="Nishimatsu S."/>
            <person name="Komaguchi C."/>
            <person name="Noji S."/>
            <person name="Nohno T."/>
        </authorList>
    </citation>
    <scope>NUCLEOTIDE SEQUENCE [MRNA]</scope>
    <source>
        <tissue>Limb bud</tissue>
    </source>
</reference>
<reference key="2">
    <citation type="journal article" date="2000" name="Mech. Dev.">
        <title>Characterization of avian frizzled genes in cranial placode development.</title>
        <authorList>
            <person name="Stark M.R."/>
            <person name="Biggs J.J."/>
            <person name="Schoenwolf G.C."/>
            <person name="Rao M.S."/>
        </authorList>
    </citation>
    <scope>NUCLEOTIDE SEQUENCE [MRNA]</scope>
    <source>
        <tissue>Embryo</tissue>
    </source>
</reference>
<reference key="3">
    <citation type="journal article" date="2000" name="Dev. Growth Differ.">
        <title>Involvement of frizzled-10 in Wnt-7a signaling during chick limb development.</title>
        <authorList>
            <person name="Kawakami Y."/>
            <person name="Wada N."/>
            <person name="Nishimatsu S."/>
            <person name="Nohno T."/>
        </authorList>
    </citation>
    <scope>FUNCTION</scope>
    <scope>INTERACTION WITH WNT7A</scope>
    <scope>SUBCELLULAR LOCATION</scope>
</reference>
<name>FZD10_CHICK</name>
<accession>Q9PWH2</accession>
<comment type="function">
    <text evidence="5 6">Receptor for Wnt proteins. Functions in the canonical Wnt/beta-catenin signaling pathway. Activation by WNT7A induces expression of beta-catenin target genes (PubMed:11142678). The canonical Wnt/beta-catenin signaling pathway leads to the activation of disheveled proteins, inhibition of GSK-3 kinase, nuclear accumulation of beta-catenin and activation of Wnt target genes (PubMed:11142678). A second signaling pathway involving PKC and calcium fluxes has been seen for some family members, but it is not yet clear if it represents a distinct pathway or if it can be integrated in the canonical pathway, as PKC seems to be required for Wnt-mediated inactivation of GSK-3 kinase. Both pathways seem to involve interactions with G-proteins. May be involved in transduction and intercellular transmission of polarity information during tissue morphogenesis and/or in differentiated tissues (Probable).</text>
</comment>
<comment type="subunit">
    <text evidence="5">Interacts with WNT7A.</text>
</comment>
<comment type="subcellular location">
    <subcellularLocation>
        <location evidence="7">Cell membrane</location>
        <topology evidence="6">Multi-pass membrane protein</topology>
    </subcellularLocation>
</comment>
<comment type="tissue specificity">
    <text>Expressed in the dorsal ectoderm overlying the developing spinal cord.</text>
</comment>
<comment type="developmental stage">
    <text>Expressed in the region posterior to the Hensen node at stage 6. Detected in the dorsal domain of the neural tube and the CNS of the developing embryo. In the developing limb, expression starts at stage 18 in the posterior-dorsal region of the distal mesenchyme, and gradually expands to the anterior-distal region. Also found in the feather bud and branchial arch.</text>
</comment>
<comment type="induction">
    <text>By Sonic hedgehog (Shh) in limb bud.</text>
</comment>
<comment type="domain">
    <text evidence="1">Lys-Thr-X-X-X-Trp motif interacts with the PDZ domain of Dvl (Disheveled) family members and is involved in the activation of the Wnt/beta-catenin signaling pathway.</text>
</comment>
<comment type="domain">
    <text evidence="1">The FZ domain is involved in binding with Wnt ligands.</text>
</comment>
<comment type="similarity">
    <text evidence="6">Belongs to the G-protein coupled receptor Fz/Smo family.</text>
</comment>
<sequence length="585" mass="65945">MGPAAGNLVRAVLALCWLAEHCAGISSIDIERPGDGRCQPIEIPMCKDIGYNMTRMPNLMGHENQREAAIQLHEFAPLVEYGCHGHLKFFLCSLYAPMCTEQVSTPIPACRVMCEQARLKCSPIMEQFNFKWPDSLDCSKLPNKNDPNYLCMEAPNNGSDEPPRGSSMLPPMFRPQRPSTGHDLQQHKDSLSRTSCENPGKFHHVEKSASCAPLCTPGVDVYWSKDDKQFAVIWIAIWSILCFFSSAFTVLTFLIDPQRFKYPERPIIFLSMCYCVYSVGYIIRLFSGAESIACDRDSGQLYVIQEGLESTGCTIVFLVLYYFGMASSLWWVILTLTWFLAAGKKWGHEAIEANSSYFHLAAWAIPAVKTIMILVMRRVAGDELTGLCYVGSMDVNALTGFVLIPLACYLIIGTSFILSGFVALFHIRRVMKTGGENTDKLEKLMVRIGVFSVLYTVPATCVIACYFYERLNMDYWKIVASQQKCKMNNQTKNLDCMMNNSIPAVEIFMVKIFMLLVVGITSGMWIWTSKTLQSWQNVCSRRLKKRSRRKPASVITSSGIYKKPQHPQKTHLAKYESTLQPPTCV</sequence>
<evidence type="ECO:0000250" key="1"/>
<evidence type="ECO:0000255" key="2"/>
<evidence type="ECO:0000255" key="3">
    <source>
        <dbReference type="PROSITE-ProRule" id="PRU00090"/>
    </source>
</evidence>
<evidence type="ECO:0000256" key="4">
    <source>
        <dbReference type="SAM" id="MobiDB-lite"/>
    </source>
</evidence>
<evidence type="ECO:0000269" key="5">
    <source>
    </source>
</evidence>
<evidence type="ECO:0000305" key="6"/>
<evidence type="ECO:0000305" key="7">
    <source>
    </source>
</evidence>
<dbReference type="EMBL" id="AB023806">
    <property type="protein sequence ID" value="BAA83742.1"/>
    <property type="molecule type" value="mRNA"/>
</dbReference>
<dbReference type="EMBL" id="AF224320">
    <property type="protein sequence ID" value="AAF61100.1"/>
    <property type="molecule type" value="mRNA"/>
</dbReference>
<dbReference type="RefSeq" id="NP_989429.1">
    <property type="nucleotide sequence ID" value="NM_204098.2"/>
</dbReference>
<dbReference type="SMR" id="Q9PWH2"/>
<dbReference type="FunCoup" id="Q9PWH2">
    <property type="interactions" value="89"/>
</dbReference>
<dbReference type="IntAct" id="Q9PWH2">
    <property type="interactions" value="2"/>
</dbReference>
<dbReference type="STRING" id="9031.ENSGALP00000052610"/>
<dbReference type="GlyCosmos" id="Q9PWH2">
    <property type="glycosylation" value="4 sites, No reported glycans"/>
</dbReference>
<dbReference type="GlyGen" id="Q9PWH2">
    <property type="glycosylation" value="4 sites"/>
</dbReference>
<dbReference type="PaxDb" id="9031-ENSGALP00000038896"/>
<dbReference type="Ensembl" id="ENSGALT00010056682.1">
    <property type="protein sequence ID" value="ENSGALP00010034424.1"/>
    <property type="gene ID" value="ENSGALG00010023250.1"/>
</dbReference>
<dbReference type="GeneID" id="373885"/>
<dbReference type="KEGG" id="gga:373885"/>
<dbReference type="CTD" id="11211"/>
<dbReference type="VEuPathDB" id="HostDB:geneid_373885"/>
<dbReference type="eggNOG" id="KOG3577">
    <property type="taxonomic scope" value="Eukaryota"/>
</dbReference>
<dbReference type="GeneTree" id="ENSGT00940000161861"/>
<dbReference type="InParanoid" id="Q9PWH2"/>
<dbReference type="OMA" id="WSILCFF"/>
<dbReference type="OrthoDB" id="5959102at2759"/>
<dbReference type="PhylomeDB" id="Q9PWH2"/>
<dbReference type="PRO" id="PR:Q9PWH2"/>
<dbReference type="Proteomes" id="UP000000539">
    <property type="component" value="Chromosome 15"/>
</dbReference>
<dbReference type="GO" id="GO:0009986">
    <property type="term" value="C:cell surface"/>
    <property type="evidence" value="ECO:0007669"/>
    <property type="project" value="Ensembl"/>
</dbReference>
<dbReference type="GO" id="GO:0005737">
    <property type="term" value="C:cytoplasm"/>
    <property type="evidence" value="ECO:0007669"/>
    <property type="project" value="Ensembl"/>
</dbReference>
<dbReference type="GO" id="GO:0005615">
    <property type="term" value="C:extracellular space"/>
    <property type="evidence" value="ECO:0000318"/>
    <property type="project" value="GO_Central"/>
</dbReference>
<dbReference type="GO" id="GO:0005654">
    <property type="term" value="C:nucleoplasm"/>
    <property type="evidence" value="ECO:0007669"/>
    <property type="project" value="Ensembl"/>
</dbReference>
<dbReference type="GO" id="GO:0005886">
    <property type="term" value="C:plasma membrane"/>
    <property type="evidence" value="ECO:0007669"/>
    <property type="project" value="UniProtKB-SubCell"/>
</dbReference>
<dbReference type="GO" id="GO:0004930">
    <property type="term" value="F:G protein-coupled receptor activity"/>
    <property type="evidence" value="ECO:0007669"/>
    <property type="project" value="UniProtKB-KW"/>
</dbReference>
<dbReference type="GO" id="GO:0042813">
    <property type="term" value="F:Wnt receptor activity"/>
    <property type="evidence" value="ECO:0007669"/>
    <property type="project" value="Ensembl"/>
</dbReference>
<dbReference type="GO" id="GO:0017147">
    <property type="term" value="F:Wnt-protein binding"/>
    <property type="evidence" value="ECO:0000318"/>
    <property type="project" value="GO_Central"/>
</dbReference>
<dbReference type="GO" id="GO:0060070">
    <property type="term" value="P:canonical Wnt signaling pathway"/>
    <property type="evidence" value="ECO:0000318"/>
    <property type="project" value="GO_Central"/>
</dbReference>
<dbReference type="GO" id="GO:0035567">
    <property type="term" value="P:non-canonical Wnt signaling pathway"/>
    <property type="evidence" value="ECO:0000318"/>
    <property type="project" value="GO_Central"/>
</dbReference>
<dbReference type="GO" id="GO:0046330">
    <property type="term" value="P:positive regulation of JNK cascade"/>
    <property type="evidence" value="ECO:0007669"/>
    <property type="project" value="Ensembl"/>
</dbReference>
<dbReference type="GO" id="GO:0032956">
    <property type="term" value="P:regulation of actin cytoskeleton organization"/>
    <property type="evidence" value="ECO:0007669"/>
    <property type="project" value="Ensembl"/>
</dbReference>
<dbReference type="CDD" id="cd15037">
    <property type="entry name" value="7tmF_FZD10"/>
    <property type="match status" value="1"/>
</dbReference>
<dbReference type="CDD" id="cd07462">
    <property type="entry name" value="CRD_FZ10"/>
    <property type="match status" value="1"/>
</dbReference>
<dbReference type="FunFam" id="1.10.2000.10:FF:000007">
    <property type="entry name" value="Frizzled class receptor 10"/>
    <property type="match status" value="1"/>
</dbReference>
<dbReference type="FunFam" id="1.20.1070.10:FF:000020">
    <property type="entry name" value="Frizzled class receptor 10"/>
    <property type="match status" value="1"/>
</dbReference>
<dbReference type="Gene3D" id="1.10.2000.10">
    <property type="entry name" value="Frizzled cysteine-rich domain"/>
    <property type="match status" value="1"/>
</dbReference>
<dbReference type="Gene3D" id="1.20.1070.10">
    <property type="entry name" value="Rhodopsin 7-helix transmembrane proteins"/>
    <property type="match status" value="1"/>
</dbReference>
<dbReference type="InterPro" id="IPR015526">
    <property type="entry name" value="Frizzled/SFRP"/>
</dbReference>
<dbReference type="InterPro" id="IPR000539">
    <property type="entry name" value="Frizzled/Smoothened_7TM"/>
</dbReference>
<dbReference type="InterPro" id="IPR020067">
    <property type="entry name" value="Frizzled_dom"/>
</dbReference>
<dbReference type="InterPro" id="IPR036790">
    <property type="entry name" value="Frizzled_dom_sf"/>
</dbReference>
<dbReference type="InterPro" id="IPR017981">
    <property type="entry name" value="GPCR_2-like_7TM"/>
</dbReference>
<dbReference type="PANTHER" id="PTHR11309">
    <property type="entry name" value="FRIZZLED"/>
    <property type="match status" value="1"/>
</dbReference>
<dbReference type="PANTHER" id="PTHR11309:SF86">
    <property type="entry name" value="FRIZZLED-10"/>
    <property type="match status" value="1"/>
</dbReference>
<dbReference type="Pfam" id="PF01534">
    <property type="entry name" value="Frizzled"/>
    <property type="match status" value="1"/>
</dbReference>
<dbReference type="Pfam" id="PF01392">
    <property type="entry name" value="Fz"/>
    <property type="match status" value="1"/>
</dbReference>
<dbReference type="PRINTS" id="PR00489">
    <property type="entry name" value="FRIZZLED"/>
</dbReference>
<dbReference type="SMART" id="SM00063">
    <property type="entry name" value="FRI"/>
    <property type="match status" value="1"/>
</dbReference>
<dbReference type="SMART" id="SM01330">
    <property type="entry name" value="Frizzled"/>
    <property type="match status" value="1"/>
</dbReference>
<dbReference type="SUPFAM" id="SSF63501">
    <property type="entry name" value="Frizzled cysteine-rich domain"/>
    <property type="match status" value="1"/>
</dbReference>
<dbReference type="PROSITE" id="PS50038">
    <property type="entry name" value="FZ"/>
    <property type="match status" value="1"/>
</dbReference>
<dbReference type="PROSITE" id="PS50261">
    <property type="entry name" value="G_PROTEIN_RECEP_F2_4"/>
    <property type="match status" value="1"/>
</dbReference>
<keyword id="KW-1003">Cell membrane</keyword>
<keyword id="KW-0217">Developmental protein</keyword>
<keyword id="KW-1015">Disulfide bond</keyword>
<keyword id="KW-0297">G-protein coupled receptor</keyword>
<keyword id="KW-0325">Glycoprotein</keyword>
<keyword id="KW-0472">Membrane</keyword>
<keyword id="KW-0675">Receptor</keyword>
<keyword id="KW-1185">Reference proteome</keyword>
<keyword id="KW-0732">Signal</keyword>
<keyword id="KW-0807">Transducer</keyword>
<keyword id="KW-0812">Transmembrane</keyword>
<keyword id="KW-1133">Transmembrane helix</keyword>
<keyword id="KW-0879">Wnt signaling pathway</keyword>
<organism>
    <name type="scientific">Gallus gallus</name>
    <name type="common">Chicken</name>
    <dbReference type="NCBI Taxonomy" id="9031"/>
    <lineage>
        <taxon>Eukaryota</taxon>
        <taxon>Metazoa</taxon>
        <taxon>Chordata</taxon>
        <taxon>Craniata</taxon>
        <taxon>Vertebrata</taxon>
        <taxon>Euteleostomi</taxon>
        <taxon>Archelosauria</taxon>
        <taxon>Archosauria</taxon>
        <taxon>Dinosauria</taxon>
        <taxon>Saurischia</taxon>
        <taxon>Theropoda</taxon>
        <taxon>Coelurosauria</taxon>
        <taxon>Aves</taxon>
        <taxon>Neognathae</taxon>
        <taxon>Galloanserae</taxon>
        <taxon>Galliformes</taxon>
        <taxon>Phasianidae</taxon>
        <taxon>Phasianinae</taxon>
        <taxon>Gallus</taxon>
    </lineage>
</organism>
<gene>
    <name type="primary">FZD10</name>
    <name type="synonym">FZ10</name>
</gene>
<feature type="signal peptide" evidence="2">
    <location>
        <begin position="1"/>
        <end position="24"/>
    </location>
</feature>
<feature type="chain" id="PRO_0000013007" description="Frizzled-10">
    <location>
        <begin position="25"/>
        <end position="585"/>
    </location>
</feature>
<feature type="topological domain" description="Extracellular" evidence="2">
    <location>
        <begin position="25"/>
        <end position="229"/>
    </location>
</feature>
<feature type="transmembrane region" description="Helical; Name=1" evidence="2">
    <location>
        <begin position="230"/>
        <end position="250"/>
    </location>
</feature>
<feature type="topological domain" description="Cytoplasmic" evidence="2">
    <location>
        <begin position="251"/>
        <end position="265"/>
    </location>
</feature>
<feature type="transmembrane region" description="Helical; Name=2" evidence="2">
    <location>
        <begin position="266"/>
        <end position="286"/>
    </location>
</feature>
<feature type="topological domain" description="Extracellular" evidence="2">
    <location>
        <begin position="287"/>
        <end position="314"/>
    </location>
</feature>
<feature type="transmembrane region" description="Helical; Name=3" evidence="2">
    <location>
        <begin position="315"/>
        <end position="335"/>
    </location>
</feature>
<feature type="topological domain" description="Cytoplasmic" evidence="2">
    <location>
        <begin position="336"/>
        <end position="355"/>
    </location>
</feature>
<feature type="transmembrane region" description="Helical; Name=4" evidence="2">
    <location>
        <begin position="356"/>
        <end position="376"/>
    </location>
</feature>
<feature type="topological domain" description="Extracellular" evidence="2">
    <location>
        <begin position="377"/>
        <end position="397"/>
    </location>
</feature>
<feature type="transmembrane region" description="Helical; Name=5" evidence="2">
    <location>
        <begin position="398"/>
        <end position="418"/>
    </location>
</feature>
<feature type="topological domain" description="Cytoplasmic" evidence="2">
    <location>
        <begin position="419"/>
        <end position="447"/>
    </location>
</feature>
<feature type="transmembrane region" description="Helical; Name=6" evidence="2">
    <location>
        <begin position="448"/>
        <end position="468"/>
    </location>
</feature>
<feature type="topological domain" description="Extracellular" evidence="2">
    <location>
        <begin position="469"/>
        <end position="506"/>
    </location>
</feature>
<feature type="transmembrane region" description="Helical; Name=7" evidence="2">
    <location>
        <begin position="507"/>
        <end position="527"/>
    </location>
</feature>
<feature type="topological domain" description="Cytoplasmic" evidence="2">
    <location>
        <begin position="528"/>
        <end position="585"/>
    </location>
</feature>
<feature type="domain" description="FZ" evidence="3">
    <location>
        <begin position="33"/>
        <end position="154"/>
    </location>
</feature>
<feature type="region of interest" description="Disordered" evidence="4">
    <location>
        <begin position="155"/>
        <end position="195"/>
    </location>
</feature>
<feature type="short sequence motif" description="Lys-Thr-X-X-X-Trp motif, mediates interaction with the PDZ domain of Dvl family members" evidence="1">
    <location>
        <begin position="530"/>
        <end position="535"/>
    </location>
</feature>
<feature type="short sequence motif" description="PDZ-binding">
    <location>
        <begin position="583"/>
        <end position="585"/>
    </location>
</feature>
<feature type="glycosylation site" description="N-linked (GlcNAc...) asparagine" evidence="2">
    <location>
        <position position="52"/>
    </location>
</feature>
<feature type="glycosylation site" description="N-linked (GlcNAc...) asparagine" evidence="2">
    <location>
        <position position="157"/>
    </location>
</feature>
<feature type="glycosylation site" description="N-linked (GlcNAc...) asparagine" evidence="2">
    <location>
        <position position="489"/>
    </location>
</feature>
<feature type="glycosylation site" description="N-linked (GlcNAc...) asparagine" evidence="2">
    <location>
        <position position="499"/>
    </location>
</feature>
<feature type="disulfide bond" evidence="3">
    <location>
        <begin position="38"/>
        <end position="99"/>
    </location>
</feature>
<feature type="disulfide bond" evidence="3">
    <location>
        <begin position="46"/>
        <end position="92"/>
    </location>
</feature>
<feature type="disulfide bond" evidence="3">
    <location>
        <begin position="83"/>
        <end position="121"/>
    </location>
</feature>
<feature type="disulfide bond" evidence="3">
    <location>
        <begin position="110"/>
        <end position="151"/>
    </location>
</feature>
<feature type="disulfide bond" evidence="3">
    <location>
        <begin position="114"/>
        <end position="138"/>
    </location>
</feature>